<keyword id="KW-0456">Lyase</keyword>
<keyword id="KW-0460">Magnesium</keyword>
<keyword id="KW-0479">Metal-binding</keyword>
<evidence type="ECO:0000250" key="1">
    <source>
        <dbReference type="UniProtKB" id="A0A1C9J6A7"/>
    </source>
</evidence>
<evidence type="ECO:0000250" key="2">
    <source>
        <dbReference type="UniProtKB" id="Q40577"/>
    </source>
</evidence>
<evidence type="ECO:0000269" key="3">
    <source>
    </source>
</evidence>
<evidence type="ECO:0000303" key="4">
    <source>
    </source>
</evidence>
<evidence type="ECO:0000305" key="5"/>
<feature type="chain" id="PRO_0000460895" description="(+)-alpha-pinene synthase TPS2FN">
    <location>
        <begin position="1"/>
        <end position="561"/>
    </location>
</feature>
<feature type="short sequence motif" description="DDXXD motif" evidence="2">
    <location>
        <begin position="313"/>
        <end position="317"/>
    </location>
</feature>
<feature type="binding site" evidence="2">
    <location>
        <position position="276"/>
    </location>
    <ligand>
        <name>(2E)-geranyl diphosphate</name>
        <dbReference type="ChEBI" id="CHEBI:58057"/>
    </ligand>
</feature>
<feature type="binding site" evidence="2">
    <location>
        <position position="313"/>
    </location>
    <ligand>
        <name>(2E)-geranyl diphosphate</name>
        <dbReference type="ChEBI" id="CHEBI:58057"/>
    </ligand>
</feature>
<feature type="binding site" evidence="2">
    <location>
        <position position="313"/>
    </location>
    <ligand>
        <name>Mg(2+)</name>
        <dbReference type="ChEBI" id="CHEBI:18420"/>
        <label>1</label>
    </ligand>
</feature>
<feature type="binding site" evidence="2">
    <location>
        <position position="313"/>
    </location>
    <ligand>
        <name>Mg(2+)</name>
        <dbReference type="ChEBI" id="CHEBI:18420"/>
        <label>2</label>
    </ligand>
</feature>
<feature type="binding site" evidence="2">
    <location>
        <position position="317"/>
    </location>
    <ligand>
        <name>(2E)-geranyl diphosphate</name>
        <dbReference type="ChEBI" id="CHEBI:58057"/>
    </ligand>
</feature>
<feature type="binding site" evidence="2">
    <location>
        <position position="317"/>
    </location>
    <ligand>
        <name>Mg(2+)</name>
        <dbReference type="ChEBI" id="CHEBI:18420"/>
        <label>1</label>
    </ligand>
</feature>
<feature type="binding site" evidence="2">
    <location>
        <position position="317"/>
    </location>
    <ligand>
        <name>Mg(2+)</name>
        <dbReference type="ChEBI" id="CHEBI:18420"/>
        <label>2</label>
    </ligand>
</feature>
<feature type="binding site" evidence="2">
    <location>
        <position position="455"/>
    </location>
    <ligand>
        <name>(2E)-geranyl diphosphate</name>
        <dbReference type="ChEBI" id="CHEBI:58057"/>
    </ligand>
</feature>
<feature type="binding site" evidence="2">
    <location>
        <position position="458"/>
    </location>
    <ligand>
        <name>(2E)-geranyl diphosphate</name>
        <dbReference type="ChEBI" id="CHEBI:58057"/>
    </ligand>
</feature>
<feature type="binding site" evidence="2">
    <location>
        <position position="458"/>
    </location>
    <ligand>
        <name>Mg(2+)</name>
        <dbReference type="ChEBI" id="CHEBI:18420"/>
        <label>3</label>
    </ligand>
</feature>
<feature type="binding site" evidence="2">
    <location>
        <position position="462"/>
    </location>
    <ligand>
        <name>Mg(2+)</name>
        <dbReference type="ChEBI" id="CHEBI:18420"/>
        <label>3</label>
    </ligand>
</feature>
<feature type="binding site" evidence="2">
    <location>
        <position position="466"/>
    </location>
    <ligand>
        <name>Mg(2+)</name>
        <dbReference type="ChEBI" id="CHEBI:18420"/>
        <label>3</label>
    </ligand>
</feature>
<sequence length="561" mass="65771">MCSLAKSPSSDTSTIVRRSANYDPPIWSFDFIQSLPCKYKGEPYTSRSNKLKEEVKKMLVGMENSLVQLELIDTLQRLGISYHFENEIISILKKYFTNISTNKNPKYDLYATALEFRLLREYGYAVPQEIFNDFKDETGKFKASIKNDDIKGVLALYEASFYVKNGENILEEARVFTTEYLKRYVMMIDQNMILNDNMAILVRHALEMPLHWRTIRAEAKWFIEEYEKTQDKNGTLLEFAKLDFNMLQSIFQEDLKHVSRWWEHSKLGKNKMVYARDRLVEAFLWQVGIRFEPQFSHFRRISARIYALITIIDDIYDVYGTLEELELFTKAVERWDVKTVDELPDYMKLPFFTLFNTVNEMAYDVLEEHNFVSVEYLKNSWAELCRCYLEEAKWFYSGYKPTLKKYIENASLSIGGQVIFVYAFFSLTKSITNEALESLQEGHYAACRQGSLMLRLADDLGTSSDELKRGDILKSVQCYMHETGVSEDEAREHIKFLISEIWKEMNDEDEYNSIFSKEFVQACKNLGRMSLFMYQHGDGHASQDSHSRKRISDLIINPIPL</sequence>
<reference key="1">
    <citation type="journal article" date="2017" name="PLoS ONE">
        <title>Terpene synthases from Cannabis sativa.</title>
        <authorList>
            <person name="Booth J.K."/>
            <person name="Page J.E."/>
            <person name="Bohlmann J."/>
        </authorList>
    </citation>
    <scope>NUCLEOTIDE SEQUENCE [MRNA]</scope>
    <scope>FUNCTION</scope>
    <scope>CATALYTIC ACTIVITY</scope>
    <scope>PATHWAY</scope>
    <scope>TISSUE SPECIFICITY</scope>
    <source>
        <strain>cv. Finola</strain>
    </source>
</reference>
<comment type="function">
    <text evidence="3">Involved in monoterpene (C10) olefins biosynthesis, constituants of cannabinoids and terpenoids-rich resins (PubMed:28355238). Catalyzes mainly the conversion of (2E)-geranyl diphosphate to (+)-alpha-pinene, and also produces minor products such as camphene, sabinene, beta-phellandrene, (-)-limonene and isoterpinolene (PubMed:28355238).</text>
</comment>
<comment type="catalytic activity">
    <reaction evidence="3">
        <text>(2E)-geranyl diphosphate = (1R,5R)-alpha-pinene + diphosphate</text>
        <dbReference type="Rhea" id="RHEA:32575"/>
        <dbReference type="ChEBI" id="CHEBI:28261"/>
        <dbReference type="ChEBI" id="CHEBI:33019"/>
        <dbReference type="ChEBI" id="CHEBI:58057"/>
        <dbReference type="EC" id="4.2.3.121"/>
    </reaction>
    <physiologicalReaction direction="left-to-right" evidence="3">
        <dbReference type="Rhea" id="RHEA:32576"/>
    </physiologicalReaction>
</comment>
<comment type="catalytic activity">
    <reaction evidence="3">
        <text>(2E)-geranyl diphosphate = (4S)-limonene + diphosphate</text>
        <dbReference type="Rhea" id="RHEA:12869"/>
        <dbReference type="ChEBI" id="CHEBI:15383"/>
        <dbReference type="ChEBI" id="CHEBI:33019"/>
        <dbReference type="ChEBI" id="CHEBI:58057"/>
        <dbReference type="EC" id="4.2.3.16"/>
    </reaction>
    <physiologicalReaction direction="left-to-right" evidence="3">
        <dbReference type="Rhea" id="RHEA:12870"/>
    </physiologicalReaction>
</comment>
<comment type="catalytic activity">
    <reaction evidence="3">
        <text>(2E)-geranyl diphosphate = sabinene + diphosphate</text>
        <dbReference type="Rhea" id="RHEA:68636"/>
        <dbReference type="ChEBI" id="CHEBI:33019"/>
        <dbReference type="ChEBI" id="CHEBI:50027"/>
        <dbReference type="ChEBI" id="CHEBI:58057"/>
    </reaction>
    <physiologicalReaction direction="left-to-right" evidence="3">
        <dbReference type="Rhea" id="RHEA:68637"/>
    </physiologicalReaction>
</comment>
<comment type="catalytic activity">
    <reaction evidence="3">
        <text>(2E)-geranyl diphosphate = beta-phellandrene + diphosphate</text>
        <dbReference type="Rhea" id="RHEA:25504"/>
        <dbReference type="ChEBI" id="CHEBI:33019"/>
        <dbReference type="ChEBI" id="CHEBI:48741"/>
        <dbReference type="ChEBI" id="CHEBI:58057"/>
    </reaction>
    <physiologicalReaction direction="left-to-right" evidence="3">
        <dbReference type="Rhea" id="RHEA:25505"/>
    </physiologicalReaction>
</comment>
<comment type="catalytic activity">
    <reaction evidence="3">
        <text>(2E)-geranyl diphosphate = camphene + diphosphate</text>
        <dbReference type="Rhea" id="RHEA:80391"/>
        <dbReference type="ChEBI" id="CHEBI:3830"/>
        <dbReference type="ChEBI" id="CHEBI:33019"/>
        <dbReference type="ChEBI" id="CHEBI:58057"/>
    </reaction>
    <physiologicalReaction direction="left-to-right" evidence="3">
        <dbReference type="Rhea" id="RHEA:80392"/>
    </physiologicalReaction>
</comment>
<comment type="catalytic activity">
    <reaction evidence="3">
        <text>(2E)-geranyl diphosphate = isoterpinolene + diphosphate</text>
        <dbReference type="Rhea" id="RHEA:80395"/>
        <dbReference type="ChEBI" id="CHEBI:33019"/>
        <dbReference type="ChEBI" id="CHEBI:58057"/>
        <dbReference type="ChEBI" id="CHEBI:88840"/>
    </reaction>
    <physiologicalReaction direction="left-to-right" evidence="3">
        <dbReference type="Rhea" id="RHEA:80396"/>
    </physiologicalReaction>
</comment>
<comment type="cofactor">
    <cofactor evidence="1">
        <name>Mg(2+)</name>
        <dbReference type="ChEBI" id="CHEBI:18420"/>
    </cofactor>
    <cofactor evidence="1">
        <name>Mn(2+)</name>
        <dbReference type="ChEBI" id="CHEBI:29035"/>
    </cofactor>
    <text evidence="1">Binds 3 Mg(2+) or Mn(2+) ions per subunit.</text>
</comment>
<comment type="pathway">
    <text evidence="3">Secondary metabolite biosynthesis; terpenoid biosynthesis.</text>
</comment>
<comment type="pathway">
    <text evidence="3">Terpene metabolism; (-)-alpha-pinene biosynthesis; (-)-alpha-pinene from geranyl diphosphate: step 1/1.</text>
</comment>
<comment type="tissue specificity">
    <text evidence="3">Expressed in glandular trichomes two to four weeks after flowering onset.</text>
</comment>
<comment type="domain">
    <text evidence="2">The Asp-Asp-Xaa-Xaa-Asp/Glu (DDXXD/E) motif is important for the catalytic activity, presumably through binding to Mg(2+).</text>
</comment>
<comment type="similarity">
    <text evidence="5">Belongs to the terpene synthase family. Tpsb subfamily.</text>
</comment>
<accession>A0A1V0QSH2</accession>
<organism>
    <name type="scientific">Cannabis sativa</name>
    <name type="common">Hemp</name>
    <name type="synonym">Marijuana</name>
    <dbReference type="NCBI Taxonomy" id="3483"/>
    <lineage>
        <taxon>Eukaryota</taxon>
        <taxon>Viridiplantae</taxon>
        <taxon>Streptophyta</taxon>
        <taxon>Embryophyta</taxon>
        <taxon>Tracheophyta</taxon>
        <taxon>Spermatophyta</taxon>
        <taxon>Magnoliopsida</taxon>
        <taxon>eudicotyledons</taxon>
        <taxon>Gunneridae</taxon>
        <taxon>Pentapetalae</taxon>
        <taxon>rosids</taxon>
        <taxon>fabids</taxon>
        <taxon>Rosales</taxon>
        <taxon>Cannabaceae</taxon>
        <taxon>Cannabis</taxon>
    </lineage>
</organism>
<proteinExistence type="evidence at protein level"/>
<protein>
    <recommendedName>
        <fullName evidence="4">(+)-alpha-pinene synthase TPS2FN</fullName>
        <ecNumber evidence="3">4.2.3.121</ecNumber>
    </recommendedName>
    <alternativeName>
        <fullName evidence="4">(-)-limonene synthase TPS2FN</fullName>
        <shortName evidence="4">(-)-(4S)-limonene synthase</shortName>
        <ecNumber evidence="3">4.2.3.16</ecNumber>
    </alternativeName>
    <alternativeName>
        <fullName evidence="4">Camphene synthase TPS2FN</fullName>
        <ecNumber evidence="3">4.2.3.-</ecNumber>
    </alternativeName>
    <alternativeName>
        <fullName evidence="4">Isoterpinolene synthase TPS2FN</fullName>
        <ecNumber evidence="3">4.2.3.-</ecNumber>
    </alternativeName>
    <alternativeName>
        <fullName evidence="4">Sabinene synthase TPS2FN</fullName>
        <ecNumber evidence="3">4.2.3.-</ecNumber>
    </alternativeName>
    <alternativeName>
        <fullName evidence="4">Terpene synthase TPS2FN</fullName>
        <shortName evidence="4">CsTPS2FN</shortName>
    </alternativeName>
    <alternativeName>
        <fullName evidence="4">beta-phellandrene synthase TPS2FN</fullName>
        <ecNumber evidence="3">4.2.3.-</ecNumber>
    </alternativeName>
</protein>
<name>TS2FN_CANSA</name>
<gene>
    <name evidence="4" type="primary">TPS2FN</name>
</gene>
<dbReference type="EC" id="4.2.3.121" evidence="3"/>
<dbReference type="EC" id="4.2.3.16" evidence="3"/>
<dbReference type="EC" id="4.2.3.-" evidence="3"/>
<dbReference type="EMBL" id="KY014565">
    <property type="protein sequence ID" value="ARE72261.1"/>
    <property type="molecule type" value="mRNA"/>
</dbReference>
<dbReference type="SMR" id="A0A1V0QSH2"/>
<dbReference type="UniPathway" id="UPA00213"/>
<dbReference type="UniPathway" id="UPA00985">
    <property type="reaction ID" value="UER00927"/>
</dbReference>
<dbReference type="Proteomes" id="UP000596661">
    <property type="component" value="Unplaced"/>
</dbReference>
<dbReference type="GO" id="GO:0000287">
    <property type="term" value="F:magnesium ion binding"/>
    <property type="evidence" value="ECO:0007669"/>
    <property type="project" value="InterPro"/>
</dbReference>
<dbReference type="GO" id="GO:0010333">
    <property type="term" value="F:terpene synthase activity"/>
    <property type="evidence" value="ECO:0007669"/>
    <property type="project" value="InterPro"/>
</dbReference>
<dbReference type="GO" id="GO:0016102">
    <property type="term" value="P:diterpenoid biosynthetic process"/>
    <property type="evidence" value="ECO:0007669"/>
    <property type="project" value="InterPro"/>
</dbReference>
<dbReference type="CDD" id="cd00684">
    <property type="entry name" value="Terpene_cyclase_plant_C1"/>
    <property type="match status" value="1"/>
</dbReference>
<dbReference type="FunFam" id="1.10.600.10:FF:000007">
    <property type="entry name" value="Isoprene synthase, chloroplastic"/>
    <property type="match status" value="1"/>
</dbReference>
<dbReference type="FunFam" id="1.50.10.130:FF:000001">
    <property type="entry name" value="Isoprene synthase, chloroplastic"/>
    <property type="match status" value="1"/>
</dbReference>
<dbReference type="Gene3D" id="1.10.600.10">
    <property type="entry name" value="Farnesyl Diphosphate Synthase"/>
    <property type="match status" value="1"/>
</dbReference>
<dbReference type="Gene3D" id="1.50.10.130">
    <property type="entry name" value="Terpene synthase, N-terminal domain"/>
    <property type="match status" value="1"/>
</dbReference>
<dbReference type="InterPro" id="IPR008949">
    <property type="entry name" value="Isoprenoid_synthase_dom_sf"/>
</dbReference>
<dbReference type="InterPro" id="IPR034741">
    <property type="entry name" value="Terpene_cyclase-like_1_C"/>
</dbReference>
<dbReference type="InterPro" id="IPR044814">
    <property type="entry name" value="Terpene_cyclase_plant_C1"/>
</dbReference>
<dbReference type="InterPro" id="IPR001906">
    <property type="entry name" value="Terpene_synth_N"/>
</dbReference>
<dbReference type="InterPro" id="IPR036965">
    <property type="entry name" value="Terpene_synth_N_sf"/>
</dbReference>
<dbReference type="InterPro" id="IPR050148">
    <property type="entry name" value="Terpene_synthase-like"/>
</dbReference>
<dbReference type="InterPro" id="IPR005630">
    <property type="entry name" value="Terpene_synthase_metal-bd"/>
</dbReference>
<dbReference type="InterPro" id="IPR008930">
    <property type="entry name" value="Terpenoid_cyclase/PrenylTrfase"/>
</dbReference>
<dbReference type="PANTHER" id="PTHR31225">
    <property type="entry name" value="OS04G0344100 PROTEIN-RELATED"/>
    <property type="match status" value="1"/>
</dbReference>
<dbReference type="PANTHER" id="PTHR31225:SF9">
    <property type="entry name" value="TERPENE SYNTHASE 10"/>
    <property type="match status" value="1"/>
</dbReference>
<dbReference type="Pfam" id="PF01397">
    <property type="entry name" value="Terpene_synth"/>
    <property type="match status" value="1"/>
</dbReference>
<dbReference type="Pfam" id="PF03936">
    <property type="entry name" value="Terpene_synth_C"/>
    <property type="match status" value="1"/>
</dbReference>
<dbReference type="SFLD" id="SFLDS00005">
    <property type="entry name" value="Isoprenoid_Synthase_Type_I"/>
    <property type="match status" value="1"/>
</dbReference>
<dbReference type="SFLD" id="SFLDG01019">
    <property type="entry name" value="Terpene_Cyclase_Like_1_C_Termi"/>
    <property type="match status" value="1"/>
</dbReference>
<dbReference type="SUPFAM" id="SSF48239">
    <property type="entry name" value="Terpenoid cyclases/Protein prenyltransferases"/>
    <property type="match status" value="1"/>
</dbReference>
<dbReference type="SUPFAM" id="SSF48576">
    <property type="entry name" value="Terpenoid synthases"/>
    <property type="match status" value="1"/>
</dbReference>